<evidence type="ECO:0000250" key="1">
    <source>
        <dbReference type="UniProtKB" id="Q9Y572"/>
    </source>
</evidence>
<evidence type="ECO:0000255" key="2">
    <source>
        <dbReference type="PROSITE-ProRule" id="PRU00159"/>
    </source>
</evidence>
<evidence type="ECO:0000256" key="3">
    <source>
        <dbReference type="SAM" id="MobiDB-lite"/>
    </source>
</evidence>
<evidence type="ECO:0000269" key="4">
    <source>
    </source>
</evidence>
<evidence type="ECO:0000269" key="5">
    <source>
    </source>
</evidence>
<evidence type="ECO:0000269" key="6">
    <source>
    </source>
</evidence>
<evidence type="ECO:0000269" key="7">
    <source>
    </source>
</evidence>
<evidence type="ECO:0000269" key="8">
    <source>
    </source>
</evidence>
<evidence type="ECO:0000269" key="9">
    <source>
    </source>
</evidence>
<evidence type="ECO:0000269" key="10">
    <source>
    </source>
</evidence>
<evidence type="ECO:0000269" key="11">
    <source>
    </source>
</evidence>
<evidence type="ECO:0000269" key="12">
    <source>
    </source>
</evidence>
<evidence type="ECO:0000269" key="13">
    <source>
    </source>
</evidence>
<evidence type="ECO:0000269" key="14">
    <source>
    </source>
</evidence>
<evidence type="ECO:0000269" key="15">
    <source>
    </source>
</evidence>
<evidence type="ECO:0000269" key="16">
    <source>
    </source>
</evidence>
<evidence type="ECO:0000269" key="17">
    <source>
    </source>
</evidence>
<evidence type="ECO:0000269" key="18">
    <source>
    </source>
</evidence>
<evidence type="ECO:0000269" key="19">
    <source>
    </source>
</evidence>
<evidence type="ECO:0000269" key="20">
    <source>
    </source>
</evidence>
<evidence type="ECO:0000269" key="21">
    <source>
    </source>
</evidence>
<evidence type="ECO:0000269" key="22">
    <source>
    </source>
</evidence>
<evidence type="ECO:0000269" key="23">
    <source>
    </source>
</evidence>
<evidence type="ECO:0000269" key="24">
    <source>
    </source>
</evidence>
<evidence type="ECO:0000269" key="25">
    <source>
    </source>
</evidence>
<evidence type="ECO:0000269" key="26">
    <source>
    </source>
</evidence>
<evidence type="ECO:0000269" key="27">
    <source>
    </source>
</evidence>
<evidence type="ECO:0000269" key="28">
    <source>
    </source>
</evidence>
<evidence type="ECO:0000269" key="29">
    <source>
    </source>
</evidence>
<evidence type="ECO:0000269" key="30">
    <source>
    </source>
</evidence>
<evidence type="ECO:0000269" key="31">
    <source>
    </source>
</evidence>
<evidence type="ECO:0000303" key="32">
    <source>
    </source>
</evidence>
<evidence type="ECO:0000303" key="33">
    <source>
    </source>
</evidence>
<evidence type="ECO:0000303" key="34">
    <source>
    </source>
</evidence>
<evidence type="ECO:0000305" key="35"/>
<evidence type="ECO:0000305" key="36">
    <source>
    </source>
</evidence>
<evidence type="ECO:0000305" key="37">
    <source>
    </source>
</evidence>
<evidence type="ECO:0000312" key="38">
    <source>
        <dbReference type="MGI" id="MGI:2154952"/>
    </source>
</evidence>
<evidence type="ECO:0007744" key="39">
    <source>
        <dbReference type="PDB" id="4M69"/>
    </source>
</evidence>
<evidence type="ECO:0007744" key="40">
    <source>
        <dbReference type="PDB" id="6OKO"/>
    </source>
</evidence>
<evidence type="ECO:0007744" key="41">
    <source>
    </source>
</evidence>
<evidence type="ECO:0007829" key="42">
    <source>
        <dbReference type="PDB" id="4M69"/>
    </source>
</evidence>
<evidence type="ECO:0007829" key="43">
    <source>
        <dbReference type="PDB" id="6JPD"/>
    </source>
</evidence>
<evidence type="ECO:0007829" key="44">
    <source>
        <dbReference type="PDB" id="6OKO"/>
    </source>
</evidence>
<protein>
    <recommendedName>
        <fullName evidence="33">Receptor-interacting serine/threonine-protein kinase 3</fullName>
        <ecNumber evidence="4 13 29 30">2.7.11.1</ecNumber>
    </recommendedName>
    <alternativeName>
        <fullName evidence="32">RIP-like protein kinase 3</fullName>
    </alternativeName>
    <alternativeName>
        <fullName evidence="32">Receptor-interacting protein 3</fullName>
        <shortName evidence="32">RIP-3</shortName>
        <shortName evidence="32">mRIP3</shortName>
    </alternativeName>
</protein>
<organism>
    <name type="scientific">Mus musculus</name>
    <name type="common">Mouse</name>
    <dbReference type="NCBI Taxonomy" id="10090"/>
    <lineage>
        <taxon>Eukaryota</taxon>
        <taxon>Metazoa</taxon>
        <taxon>Chordata</taxon>
        <taxon>Craniata</taxon>
        <taxon>Vertebrata</taxon>
        <taxon>Euteleostomi</taxon>
        <taxon>Mammalia</taxon>
        <taxon>Eutheria</taxon>
        <taxon>Euarchontoglires</taxon>
        <taxon>Glires</taxon>
        <taxon>Rodentia</taxon>
        <taxon>Myomorpha</taxon>
        <taxon>Muroidea</taxon>
        <taxon>Muridae</taxon>
        <taxon>Murinae</taxon>
        <taxon>Mus</taxon>
        <taxon>Mus</taxon>
    </lineage>
</organism>
<sequence length="486" mass="53322">MSSVKLWPTGASAVPLVSREELKKLEFVGKGGFGVVFRAHHRTWNHDVAVKIVNSKKISWEVKAMVNLRNENVLLLLGVTEDLQWDFVSGQALVTRFMENGSLAGLLQPECPRPWPLLCRLLQEVVLGMCYLHSLNPPLLHRDLKPSNILLDPELHAKLADFGLSTFQGGSQSGSGSGSGSRDSGGTLAYLDPELLFDVNLKASKASDVYSFGILVWAVLAGREAELVDKTSLIRETVCDRQSRPPLTELPPGSPETPGLEKLKELMIHCWGSQSENRPSFQDCEPKTNEVYNLVKDKVDAAVSEVKHYLSQHRSSGRNLSAREPSQRGTEMDCPRETMVSKMLDRLHLEEPSGPVPGKCPERQAQDTSVGPATPARTSSDPVAGTPQIPHTLPFRGTTPGPVFTETPGPHPQRNQGDGRHGTPWYPWTPPNPMTGPPALVFNNCSEVQIGNYNSLVAPPRTTASSSAKYDQAQFGRGRGWQPFHK</sequence>
<accession>Q9QZL0</accession>
<accession>G3X8V8</accession>
<accession>Q3U3Z9</accession>
<accession>Q8K2Y2</accession>
<gene>
    <name evidence="34 38" type="primary">Ripk3</name>
    <name evidence="33" type="synonym">Rip3</name>
</gene>
<reference key="1">
    <citation type="journal article" date="1999" name="Mol. Cell. Biol.">
        <title>Mouse receptor interacting protein 3 does not contain a caspase-recruiting or a death domain but induces apoptosis and activates NF-kappaB.</title>
        <authorList>
            <person name="Pazdernik N.J."/>
            <person name="Donner D.B."/>
            <person name="Goebl M.G."/>
            <person name="Harrington M.A."/>
        </authorList>
    </citation>
    <scope>NUCLEOTIDE SEQUENCE [MRNA]</scope>
    <scope>ACTIVE SITE</scope>
    <scope>TISSUE SPECIFICITY</scope>
    <scope>MUTAGENESIS OF ASP-143</scope>
    <source>
        <tissue>Embryo</tissue>
    </source>
</reference>
<reference key="2">
    <citation type="journal article" date="2005" name="Science">
        <title>The transcriptional landscape of the mammalian genome.</title>
        <authorList>
            <person name="Carninci P."/>
            <person name="Kasukawa T."/>
            <person name="Katayama S."/>
            <person name="Gough J."/>
            <person name="Frith M.C."/>
            <person name="Maeda N."/>
            <person name="Oyama R."/>
            <person name="Ravasi T."/>
            <person name="Lenhard B."/>
            <person name="Wells C."/>
            <person name="Kodzius R."/>
            <person name="Shimokawa K."/>
            <person name="Bajic V.B."/>
            <person name="Brenner S.E."/>
            <person name="Batalov S."/>
            <person name="Forrest A.R."/>
            <person name="Zavolan M."/>
            <person name="Davis M.J."/>
            <person name="Wilming L.G."/>
            <person name="Aidinis V."/>
            <person name="Allen J.E."/>
            <person name="Ambesi-Impiombato A."/>
            <person name="Apweiler R."/>
            <person name="Aturaliya R.N."/>
            <person name="Bailey T.L."/>
            <person name="Bansal M."/>
            <person name="Baxter L."/>
            <person name="Beisel K.W."/>
            <person name="Bersano T."/>
            <person name="Bono H."/>
            <person name="Chalk A.M."/>
            <person name="Chiu K.P."/>
            <person name="Choudhary V."/>
            <person name="Christoffels A."/>
            <person name="Clutterbuck D.R."/>
            <person name="Crowe M.L."/>
            <person name="Dalla E."/>
            <person name="Dalrymple B.P."/>
            <person name="de Bono B."/>
            <person name="Della Gatta G."/>
            <person name="di Bernardo D."/>
            <person name="Down T."/>
            <person name="Engstrom P."/>
            <person name="Fagiolini M."/>
            <person name="Faulkner G."/>
            <person name="Fletcher C.F."/>
            <person name="Fukushima T."/>
            <person name="Furuno M."/>
            <person name="Futaki S."/>
            <person name="Gariboldi M."/>
            <person name="Georgii-Hemming P."/>
            <person name="Gingeras T.R."/>
            <person name="Gojobori T."/>
            <person name="Green R.E."/>
            <person name="Gustincich S."/>
            <person name="Harbers M."/>
            <person name="Hayashi Y."/>
            <person name="Hensch T.K."/>
            <person name="Hirokawa N."/>
            <person name="Hill D."/>
            <person name="Huminiecki L."/>
            <person name="Iacono M."/>
            <person name="Ikeo K."/>
            <person name="Iwama A."/>
            <person name="Ishikawa T."/>
            <person name="Jakt M."/>
            <person name="Kanapin A."/>
            <person name="Katoh M."/>
            <person name="Kawasawa Y."/>
            <person name="Kelso J."/>
            <person name="Kitamura H."/>
            <person name="Kitano H."/>
            <person name="Kollias G."/>
            <person name="Krishnan S.P."/>
            <person name="Kruger A."/>
            <person name="Kummerfeld S.K."/>
            <person name="Kurochkin I.V."/>
            <person name="Lareau L.F."/>
            <person name="Lazarevic D."/>
            <person name="Lipovich L."/>
            <person name="Liu J."/>
            <person name="Liuni S."/>
            <person name="McWilliam S."/>
            <person name="Madan Babu M."/>
            <person name="Madera M."/>
            <person name="Marchionni L."/>
            <person name="Matsuda H."/>
            <person name="Matsuzawa S."/>
            <person name="Miki H."/>
            <person name="Mignone F."/>
            <person name="Miyake S."/>
            <person name="Morris K."/>
            <person name="Mottagui-Tabar S."/>
            <person name="Mulder N."/>
            <person name="Nakano N."/>
            <person name="Nakauchi H."/>
            <person name="Ng P."/>
            <person name="Nilsson R."/>
            <person name="Nishiguchi S."/>
            <person name="Nishikawa S."/>
            <person name="Nori F."/>
            <person name="Ohara O."/>
            <person name="Okazaki Y."/>
            <person name="Orlando V."/>
            <person name="Pang K.C."/>
            <person name="Pavan W.J."/>
            <person name="Pavesi G."/>
            <person name="Pesole G."/>
            <person name="Petrovsky N."/>
            <person name="Piazza S."/>
            <person name="Reed J."/>
            <person name="Reid J.F."/>
            <person name="Ring B.Z."/>
            <person name="Ringwald M."/>
            <person name="Rost B."/>
            <person name="Ruan Y."/>
            <person name="Salzberg S.L."/>
            <person name="Sandelin A."/>
            <person name="Schneider C."/>
            <person name="Schoenbach C."/>
            <person name="Sekiguchi K."/>
            <person name="Semple C.A."/>
            <person name="Seno S."/>
            <person name="Sessa L."/>
            <person name="Sheng Y."/>
            <person name="Shibata Y."/>
            <person name="Shimada H."/>
            <person name="Shimada K."/>
            <person name="Silva D."/>
            <person name="Sinclair B."/>
            <person name="Sperling S."/>
            <person name="Stupka E."/>
            <person name="Sugiura K."/>
            <person name="Sultana R."/>
            <person name="Takenaka Y."/>
            <person name="Taki K."/>
            <person name="Tammoja K."/>
            <person name="Tan S.L."/>
            <person name="Tang S."/>
            <person name="Taylor M.S."/>
            <person name="Tegner J."/>
            <person name="Teichmann S.A."/>
            <person name="Ueda H.R."/>
            <person name="van Nimwegen E."/>
            <person name="Verardo R."/>
            <person name="Wei C.L."/>
            <person name="Yagi K."/>
            <person name="Yamanishi H."/>
            <person name="Zabarovsky E."/>
            <person name="Zhu S."/>
            <person name="Zimmer A."/>
            <person name="Hide W."/>
            <person name="Bult C."/>
            <person name="Grimmond S.M."/>
            <person name="Teasdale R.D."/>
            <person name="Liu E.T."/>
            <person name="Brusic V."/>
            <person name="Quackenbush J."/>
            <person name="Wahlestedt C."/>
            <person name="Mattick J.S."/>
            <person name="Hume D.A."/>
            <person name="Kai C."/>
            <person name="Sasaki D."/>
            <person name="Tomaru Y."/>
            <person name="Fukuda S."/>
            <person name="Kanamori-Katayama M."/>
            <person name="Suzuki M."/>
            <person name="Aoki J."/>
            <person name="Arakawa T."/>
            <person name="Iida J."/>
            <person name="Imamura K."/>
            <person name="Itoh M."/>
            <person name="Kato T."/>
            <person name="Kawaji H."/>
            <person name="Kawagashira N."/>
            <person name="Kawashima T."/>
            <person name="Kojima M."/>
            <person name="Kondo S."/>
            <person name="Konno H."/>
            <person name="Nakano K."/>
            <person name="Ninomiya N."/>
            <person name="Nishio T."/>
            <person name="Okada M."/>
            <person name="Plessy C."/>
            <person name="Shibata K."/>
            <person name="Shiraki T."/>
            <person name="Suzuki S."/>
            <person name="Tagami M."/>
            <person name="Waki K."/>
            <person name="Watahiki A."/>
            <person name="Okamura-Oho Y."/>
            <person name="Suzuki H."/>
            <person name="Kawai J."/>
            <person name="Hayashizaki Y."/>
        </authorList>
    </citation>
    <scope>NUCLEOTIDE SEQUENCE [LARGE SCALE MRNA]</scope>
    <source>
        <strain>NOD</strain>
    </source>
</reference>
<reference key="3">
    <citation type="journal article" date="2009" name="PLoS Biol.">
        <title>Lineage-specific biology revealed by a finished genome assembly of the mouse.</title>
        <authorList>
            <person name="Church D.M."/>
            <person name="Goodstadt L."/>
            <person name="Hillier L.W."/>
            <person name="Zody M.C."/>
            <person name="Goldstein S."/>
            <person name="She X."/>
            <person name="Bult C.J."/>
            <person name="Agarwala R."/>
            <person name="Cherry J.L."/>
            <person name="DiCuccio M."/>
            <person name="Hlavina W."/>
            <person name="Kapustin Y."/>
            <person name="Meric P."/>
            <person name="Maglott D."/>
            <person name="Birtle Z."/>
            <person name="Marques A.C."/>
            <person name="Graves T."/>
            <person name="Zhou S."/>
            <person name="Teague B."/>
            <person name="Potamousis K."/>
            <person name="Churas C."/>
            <person name="Place M."/>
            <person name="Herschleb J."/>
            <person name="Runnheim R."/>
            <person name="Forrest D."/>
            <person name="Amos-Landgraf J."/>
            <person name="Schwartz D.C."/>
            <person name="Cheng Z."/>
            <person name="Lindblad-Toh K."/>
            <person name="Eichler E.E."/>
            <person name="Ponting C.P."/>
        </authorList>
    </citation>
    <scope>NUCLEOTIDE SEQUENCE [LARGE SCALE GENOMIC DNA]</scope>
    <source>
        <strain>C57BL/6J</strain>
    </source>
</reference>
<reference key="4">
    <citation type="submission" date="2005-07" db="EMBL/GenBank/DDBJ databases">
        <authorList>
            <person name="Mural R.J."/>
            <person name="Adams M.D."/>
            <person name="Myers E.W."/>
            <person name="Smith H.O."/>
            <person name="Venter J.C."/>
        </authorList>
    </citation>
    <scope>NUCLEOTIDE SEQUENCE [LARGE SCALE GENOMIC DNA]</scope>
</reference>
<reference key="5">
    <citation type="journal article" date="2004" name="Genome Res.">
        <title>The status, quality, and expansion of the NIH full-length cDNA project: the Mammalian Gene Collection (MGC).</title>
        <authorList>
            <consortium name="The MGC Project Team"/>
        </authorList>
    </citation>
    <scope>NUCLEOTIDE SEQUENCE [LARGE SCALE MRNA]</scope>
    <source>
        <strain>Czech II</strain>
        <tissue>Mammary tumor</tissue>
    </source>
</reference>
<reference key="6">
    <citation type="journal article" date="2004" name="Mol. Cell. Biol.">
        <title>Kinase RIP3 is dispensable for normal NF-kappa Bs, signaling by the B-cell and T-cell receptors, tumor necrosis factor receptor 1, and Toll-like receptors 2 and 4.</title>
        <authorList>
            <person name="Newton K."/>
            <person name="Sun X."/>
            <person name="Dixit V.M."/>
        </authorList>
    </citation>
    <scope>DISRUPTION PHENOTYPE</scope>
</reference>
<reference key="7">
    <citation type="journal article" date="2008" name="J. Biol. Chem.">
        <title>Cytomegalovirus M45 cell death suppression requires receptor-interacting protein (RIP) homotypic interaction motif (RHIM)-dependent interaction with RIP1.</title>
        <authorList>
            <person name="Upton J.W."/>
            <person name="Kaiser W.J."/>
            <person name="Mocarski E.S."/>
        </authorList>
    </citation>
    <scope>INTERACTION WITH MURID HERPESVIRUS 1 RIR1 (MICROBIAL INFECTION)</scope>
    <scope>MUTAGENESIS OF 448-VAL--GLY-451</scope>
</reference>
<reference key="8">
    <citation type="journal article" date="2009" name="EMBO Rep.">
        <title>DAI/ZBP1 recruits RIP1 and RIP3 through RIP homotypic interaction motifs to activate NF-kappaB.</title>
        <authorList>
            <person name="Rebsamen M."/>
            <person name="Heinz L.X."/>
            <person name="Meylan E."/>
            <person name="Michallet M.C."/>
            <person name="Schroder K."/>
            <person name="Hofmann K."/>
            <person name="Vazquez J."/>
            <person name="Benedict C.A."/>
            <person name="Tschopp J."/>
        </authorList>
    </citation>
    <scope>FUNCTION</scope>
    <scope>INTERACTION WITH ZBP1</scope>
</reference>
<reference key="9">
    <citation type="journal article" date="2009" name="Immunity">
        <title>The phagosomal proteome in interferon-gamma-activated macrophages.</title>
        <authorList>
            <person name="Trost M."/>
            <person name="English L."/>
            <person name="Lemieux S."/>
            <person name="Courcelles M."/>
            <person name="Desjardins M."/>
            <person name="Thibault P."/>
        </authorList>
    </citation>
    <scope>IDENTIFICATION BY MASS SPECTROMETRY [LARGE SCALE ANALYSIS]</scope>
</reference>
<reference key="10">
    <citation type="journal article" date="2010" name="Cell">
        <title>A tissue-specific atlas of mouse protein phosphorylation and expression.</title>
        <authorList>
            <person name="Huttlin E.L."/>
            <person name="Jedrychowski M.P."/>
            <person name="Elias J.E."/>
            <person name="Goswami T."/>
            <person name="Rad R."/>
            <person name="Beausoleil S.A."/>
            <person name="Villen J."/>
            <person name="Haas W."/>
            <person name="Sowa M.E."/>
            <person name="Gygi S.P."/>
        </authorList>
    </citation>
    <scope>IDENTIFICATION BY MASS SPECTROMETRY [LARGE SCALE ANALYSIS]</scope>
    <source>
        <tissue>Spleen</tissue>
    </source>
</reference>
<reference key="11">
    <citation type="journal article" date="2012" name="Cell">
        <title>Mixed lineage kinase domain-like protein mediates necrosis signaling downstream of RIP3 kinase.</title>
        <authorList>
            <person name="Sun L."/>
            <person name="Wang H."/>
            <person name="Wang Z."/>
            <person name="He S."/>
            <person name="Chen S."/>
            <person name="Liao D."/>
            <person name="Wang L."/>
            <person name="Yan J."/>
            <person name="Liu W."/>
            <person name="Lei X."/>
            <person name="Wang X."/>
        </authorList>
    </citation>
    <scope>MUTAGENESIS OF SER-232</scope>
</reference>
<reference key="12">
    <citation type="journal article" date="2012" name="Cell Host Microbe">
        <title>DAI/ZBP1/DLM-1 complexes with RIP3 to mediate virus-induced programmed necrosis that is targeted by murine cytomegalovirus vIRA.</title>
        <authorList>
            <person name="Upton J.W."/>
            <person name="Kaiser W.J."/>
            <person name="Mocarski E.S."/>
        </authorList>
    </citation>
    <scope>FUNCTION</scope>
    <scope>INTERACTION WITH ZBP1</scope>
</reference>
<reference key="13">
    <citation type="journal article" date="2019" name="Cell Host Microbe">
        <title>DAI/ZBP1/DLM-1 complexes with RIP3 to mediate virus-induced programmed necrosis that is targeted by murine cytomegalovirus vIRA.</title>
        <authorList>
            <person name="Upton J.W."/>
            <person name="Kaiser W.J."/>
            <person name="Mocarski E.S."/>
        </authorList>
    </citation>
    <scope>ERRATUM OF PUBMED:22423968</scope>
</reference>
<reference key="14">
    <citation type="journal article" date="2013" name="J. Biol. Chem.">
        <title>Toll-like receptor 3-mediated necrosis via TRIF, RIP3, and MLKL.</title>
        <authorList>
            <person name="Kaiser W.J."/>
            <person name="Sridharan H."/>
            <person name="Huang C."/>
            <person name="Mandal P."/>
            <person name="Upton J.W."/>
            <person name="Gough P.J."/>
            <person name="Sehon C.A."/>
            <person name="Marquis R.W."/>
            <person name="Bertin J."/>
            <person name="Mocarski E.S."/>
        </authorList>
    </citation>
    <scope>FUNCTION</scope>
</reference>
<reference key="15">
    <citation type="journal article" date="2013" name="Immunity">
        <title>The pseudokinase MLKL mediates necroptosis via a molecular switch mechanism.</title>
        <authorList>
            <person name="Murphy J.M."/>
            <person name="Czabotar P.E."/>
            <person name="Hildebrand J.M."/>
            <person name="Lucet I.S."/>
            <person name="Zhang J.G."/>
            <person name="Alvarez-Diaz S."/>
            <person name="Lewis R."/>
            <person name="Lalaoui N."/>
            <person name="Metcalf D."/>
            <person name="Webb A.I."/>
            <person name="Young S.N."/>
            <person name="Varghese L.N."/>
            <person name="Tannahill G.M."/>
            <person name="Hatchell E.C."/>
            <person name="Majewski I.J."/>
            <person name="Okamoto T."/>
            <person name="Dobson R.C."/>
            <person name="Hilton D.J."/>
            <person name="Babon J.J."/>
            <person name="Nicola N.A."/>
            <person name="Strasser A."/>
            <person name="Silke J."/>
            <person name="Alexander W.S."/>
        </authorList>
    </citation>
    <scope>FUNCTION</scope>
    <scope>MUTAGENESIS OF ASP-143</scope>
    <scope>INTERACTION WITH MLKL</scope>
</reference>
<reference key="16">
    <citation type="journal article" date="2013" name="J. Biol. Chem.">
        <title>Diverse sequence determinants control human and mouse receptor interacting protein 3 (RIP3) and mixed lineage kinase domain-like (MLKL) interaction in necroptotic signaling.</title>
        <authorList>
            <person name="Chen W."/>
            <person name="Zhou Z."/>
            <person name="Li L."/>
            <person name="Zhong C.Q."/>
            <person name="Zheng X."/>
            <person name="Wu X."/>
            <person name="Zhang Y."/>
            <person name="Ma H."/>
            <person name="Huang D."/>
            <person name="Li W."/>
            <person name="Xia Z."/>
            <person name="Han J."/>
        </authorList>
    </citation>
    <scope>PHOSPHORYLATION AT SER-2; SER-165; THR-231; SER-232; THR-257; SER-304; SER-326; THR-338; SER-353; SER-369; SER-380 AND THR-392</scope>
    <scope>INTERACTION WITH MLKL</scope>
    <scope>MUTAGENESIS OF THR-231 AND SER-232</scope>
</reference>
<reference key="17">
    <citation type="journal article" date="2014" name="Cell">
        <title>RIPK1 regulates RIPK3-MLKL-driven systemic inflammation and emergency hematopoiesis.</title>
        <authorList>
            <person name="Rickard J.A."/>
            <person name="O'Donnell J.A."/>
            <person name="Evans J.M."/>
            <person name="Lalaoui N."/>
            <person name="Poh A.R."/>
            <person name="Rogers T."/>
            <person name="Vince J.E."/>
            <person name="Lawlor K.E."/>
            <person name="Ninnis R.L."/>
            <person name="Anderton H."/>
            <person name="Hall C."/>
            <person name="Spall S.K."/>
            <person name="Phesse T.J."/>
            <person name="Abud H.E."/>
            <person name="Cengia L.H."/>
            <person name="Corbin J."/>
            <person name="Mifsud S."/>
            <person name="Di Rago L."/>
            <person name="Metcalf D."/>
            <person name="Ernst M."/>
            <person name="Dewson G."/>
            <person name="Roberts A.W."/>
            <person name="Alexander W.S."/>
            <person name="Murphy J.M."/>
            <person name="Ekert P.G."/>
            <person name="Masters S.L."/>
            <person name="Vaux D.L."/>
            <person name="Croker B.A."/>
            <person name="Gerlic M."/>
            <person name="Silke J."/>
        </authorList>
    </citation>
    <scope>FUNCTION</scope>
    <scope>ACTIVITY REGULATION</scope>
    <scope>DISRUPTION PHENOTYPE</scope>
</reference>
<reference key="18">
    <citation type="journal article" date="2014" name="Cell">
        <title>RIPK1 blocks early postnatal lethality mediated by caspase-8 and RIPK3.</title>
        <authorList>
            <person name="Dillon C.P."/>
            <person name="Weinlich R."/>
            <person name="Rodriguez D.A."/>
            <person name="Cripps J.G."/>
            <person name="Quarato G."/>
            <person name="Gurung P."/>
            <person name="Verbist K.C."/>
            <person name="Brewer T.L."/>
            <person name="Llambi F."/>
            <person name="Gong Y.N."/>
            <person name="Janke L.J."/>
            <person name="Kelliher M.A."/>
            <person name="Kanneganti T.D."/>
            <person name="Green D.R."/>
        </authorList>
    </citation>
    <scope>FUNCTION</scope>
    <scope>ACTIVITY REGULATION</scope>
    <scope>DISRUPTION PHENOTYPE</scope>
</reference>
<reference key="19">
    <citation type="journal article" date="2014" name="Mol. Cell. Proteomics">
        <title>Immunoaffinity enrichment and mass spectrometry analysis of protein methylation.</title>
        <authorList>
            <person name="Guo A."/>
            <person name="Gu H."/>
            <person name="Zhou J."/>
            <person name="Mulhern D."/>
            <person name="Wang Y."/>
            <person name="Lee K.A."/>
            <person name="Yang V."/>
            <person name="Aguiar M."/>
            <person name="Kornhauser J."/>
            <person name="Jia X."/>
            <person name="Ren J."/>
            <person name="Beausoleil S.A."/>
            <person name="Silva J.C."/>
            <person name="Vemulapalli V."/>
            <person name="Bedford M.T."/>
            <person name="Comb M.J."/>
        </authorList>
    </citation>
    <scope>METHYLATION [LARGE SCALE ANALYSIS] AT ARG-477</scope>
    <scope>IDENTIFICATION BY MASS SPECTROMETRY [LARGE SCALE ANALYSIS]</scope>
    <source>
        <tissue>Brain</tissue>
        <tissue>Embryo</tissue>
    </source>
</reference>
<reference key="20">
    <citation type="journal article" date="2014" name="Science">
        <title>Activity of protein kinase RIPK3 determines whether cells die by necroptosis or apoptosis.</title>
        <authorList>
            <person name="Newton K."/>
            <person name="Dugger D.L."/>
            <person name="Wickliffe K.E."/>
            <person name="Kapoor N."/>
            <person name="de Almagro M.C."/>
            <person name="Vucic D."/>
            <person name="Komuves L."/>
            <person name="Ferrando R.E."/>
            <person name="French D.M."/>
            <person name="Webster J."/>
            <person name="Roose-Girma M."/>
            <person name="Warming S."/>
            <person name="Dixit V.M."/>
        </authorList>
    </citation>
    <scope>FUNCTION</scope>
    <scope>ACTIVITY REGULATION</scope>
    <scope>DISRUPTION PHENOTYPE</scope>
    <scope>MUTAGENESIS OF ASP-161</scope>
</reference>
<reference key="21">
    <citation type="journal article" date="2016" name="Cell Host Microbe">
        <title>RIPK3 activates parallel pathways of MLKL-driven necroptosis and FADD-mediated apoptosis to protect against influenza A virus.</title>
        <authorList>
            <person name="Nogusa S."/>
            <person name="Thapa R.J."/>
            <person name="Dillon C.P."/>
            <person name="Liedmann S."/>
            <person name="Oguin T.H. III"/>
            <person name="Ingram J.P."/>
            <person name="Rodriguez D.A."/>
            <person name="Kosoff R."/>
            <person name="Sharma S."/>
            <person name="Sturm O."/>
            <person name="Verbist K."/>
            <person name="Gough P.J."/>
            <person name="Bertin J."/>
            <person name="Hartmann B.M."/>
            <person name="Sealfon S.C."/>
            <person name="Kaiser W.J."/>
            <person name="Mocarski E.S."/>
            <person name="Lopez C.B."/>
            <person name="Thomas P.G."/>
            <person name="Oberst A."/>
            <person name="Green D.R."/>
            <person name="Balachandran S."/>
        </authorList>
    </citation>
    <scope>FUNCTION</scope>
    <scope>ACTIVITY REGULATION</scope>
    <scope>INTERACTION WITH RIPK1 AND MLKL</scope>
    <scope>DISRUPTION PHENOTYPE</scope>
    <scope>MUTAGENESIS OF 448-VAL--GLY-451</scope>
</reference>
<reference key="22">
    <citation type="journal article" date="2016" name="Cell Host Microbe">
        <title>DAI senses influenza A virus genomic RNA and activates RIPK3-dependent cell death.</title>
        <authorList>
            <person name="Thapa R.J."/>
            <person name="Ingram J.P."/>
            <person name="Ragan K.B."/>
            <person name="Nogusa S."/>
            <person name="Boyd D.F."/>
            <person name="Benitez A.A."/>
            <person name="Sridharan H."/>
            <person name="Kosoff R."/>
            <person name="Shubina M."/>
            <person name="Landsteiner V.J."/>
            <person name="Andrake M."/>
            <person name="Vogel P."/>
            <person name="Sigal L.J."/>
            <person name="tenOever B.R."/>
            <person name="Thomas P.G."/>
            <person name="Upton J.W."/>
            <person name="Balachandran S."/>
        </authorList>
    </citation>
    <scope>FUNCTION</scope>
    <scope>INTERACTION WITH ZBP1</scope>
</reference>
<reference key="23">
    <citation type="journal article" date="2016" name="Nature">
        <title>RIPK1 counteracts ZBP1-mediated necroptosis to inhibit inflammation.</title>
        <authorList>
            <person name="Lin J."/>
            <person name="Kumari S."/>
            <person name="Kim C."/>
            <person name="Van T.M."/>
            <person name="Wachsmuth L."/>
            <person name="Polykratis A."/>
            <person name="Pasparakis M."/>
        </authorList>
    </citation>
    <scope>FUNCTION</scope>
    <scope>ACTIVITY REGULATION</scope>
    <scope>DISRUPTION PHENOTYPE</scope>
    <scope>PHOSPHORYLATION</scope>
    <scope>INTERACTION WITH ZBP1 AND RIPK1</scope>
</reference>
<reference key="24">
    <citation type="journal article" date="2016" name="Nature">
        <title>RIPK1 inhibits ZBP1-driven necroptosis during development.</title>
        <authorList>
            <person name="Newton K."/>
            <person name="Wickliffe K.E."/>
            <person name="Maltzman A."/>
            <person name="Dugger D.L."/>
            <person name="Strasser A."/>
            <person name="Pham V.C."/>
            <person name="Lill J.R."/>
            <person name="Roose-Girma M."/>
            <person name="Warming S."/>
            <person name="Solon M."/>
            <person name="Ngu H."/>
            <person name="Webster J.D."/>
            <person name="Dixit V.M."/>
        </authorList>
    </citation>
    <scope>FUNCTION</scope>
    <scope>ACTIVITY REGULATION</scope>
    <scope>DISRUPTION PHENOTYPE</scope>
    <scope>INTERACTION WITH ZBP1</scope>
    <scope>PHOSPHORYLATION AT THR-231 AND SER-232</scope>
    <scope>MUTAGENESIS OF ASP-161 AND 448-VAL--GLY-451</scope>
</reference>
<reference key="25">
    <citation type="journal article" date="2016" name="Sci. Immunol.">
        <title>ZBP1/DAI is an innate sensor of influenza virus triggering the NLRP3 inflammasome and programmed cell death pathways.</title>
        <authorList>
            <person name="Kuriakose T."/>
            <person name="Man S.M."/>
            <person name="Malireddi R.K."/>
            <person name="Karki R."/>
            <person name="Kesavardhana S."/>
            <person name="Place D.E."/>
            <person name="Neale G."/>
            <person name="Vogel P."/>
            <person name="Kanneganti T.D."/>
        </authorList>
    </citation>
    <scope>FUNCTION</scope>
</reference>
<reference key="26">
    <citation type="journal article" date="2017" name="EMBO Rep.">
        <title>Murine cytomegalovirus IE3-dependent transcription is required for DAI/ZBP1-mediated necroptosis.</title>
        <authorList>
            <person name="Sridharan H."/>
            <person name="Ragan K.B."/>
            <person name="Guo H."/>
            <person name="Gilley R.P."/>
            <person name="Landsteiner V.J."/>
            <person name="Kaiser W.J."/>
            <person name="Upton J.W."/>
        </authorList>
    </citation>
    <scope>FUNCTION</scope>
    <scope>SUBCELLULAR LOCATION</scope>
    <scope>INTERACTION WITH ZBP1</scope>
</reference>
<reference key="27">
    <citation type="journal article" date="2017" name="Nat. Commun.">
        <title>Regulation of RIPK1 activation by TAK1-mediated phosphorylation dictates apoptosis and necroptosis.</title>
        <authorList>
            <person name="Geng J."/>
            <person name="Ito Y."/>
            <person name="Shi L."/>
            <person name="Amin P."/>
            <person name="Chu J."/>
            <person name="Ouchida A.T."/>
            <person name="Mookhtiar A.K."/>
            <person name="Zhao H."/>
            <person name="Xu D."/>
            <person name="Shan B."/>
            <person name="Najafov A."/>
            <person name="Gao G."/>
            <person name="Akira S."/>
            <person name="Yuan J."/>
        </authorList>
    </citation>
    <scope>INTERACTION WITH RIPK1</scope>
</reference>
<reference key="28">
    <citation type="journal article" date="2018" name="Mol. Cell">
        <title>PELI1 selectively targets kinase-active RIP3 for ubiquitylation-dependent proteasomal degradation.</title>
        <authorList>
            <person name="Choi S.W."/>
            <person name="Park H.H."/>
            <person name="Kim S."/>
            <person name="Chung J.M."/>
            <person name="Noh H.J."/>
            <person name="Kim S.K."/>
            <person name="Song H.K."/>
            <person name="Lee C.W."/>
            <person name="Morgan M.J."/>
            <person name="Kang H.C."/>
            <person name="Kim Y.S."/>
        </authorList>
    </citation>
    <scope>INTERACTION WITH PELI1</scope>
</reference>
<reference key="29">
    <citation type="journal article" date="2019" name="EMBO Rep.">
        <title>Viral M45 and necroptosis-associated proteins form heteromeric amyloid assemblies.</title>
        <authorList>
            <person name="Pham C.L."/>
            <person name="Shanmugam N."/>
            <person name="Strange M."/>
            <person name="O'Carroll A."/>
            <person name="Brown J.W."/>
            <person name="Sierecki E."/>
            <person name="Gambin Y."/>
            <person name="Steain M."/>
            <person name="Sunde M."/>
        </authorList>
    </citation>
    <scope>INTERACTION WITH MURID HERPESVIRUS 1 RIR1 (MICROBIAL INFECTION)</scope>
</reference>
<reference key="30">
    <citation type="journal article" date="2019" name="Immunity">
        <title>The nucleotide sensor ZBP1 and kinase RIPK3 induce the enzyme IRG1 to promote an antiviral metabolic state in neurons.</title>
        <authorList>
            <person name="Daniels B.P."/>
            <person name="Kofman S.B."/>
            <person name="Smith J.R."/>
            <person name="Norris G.T."/>
            <person name="Snyder A.G."/>
            <person name="Kolb J.P."/>
            <person name="Gao X."/>
            <person name="Locasale J.W."/>
            <person name="Martinez J."/>
            <person name="Gale M. Jr."/>
            <person name="Loo Y.M."/>
            <person name="Oberst A."/>
        </authorList>
    </citation>
    <scope>FUNCTION</scope>
</reference>
<reference key="31">
    <citation type="journal article" date="2019" name="Nat. Commun.">
        <title>K63-linked ubiquitination regulates RIPK1 kinase activity to prevent cell death during embryogenesis and inflammation.</title>
        <authorList>
            <person name="Tang Y."/>
            <person name="Tu H."/>
            <person name="Zhang J."/>
            <person name="Zhao X."/>
            <person name="Wang Y."/>
            <person name="Qin J."/>
            <person name="Lin X."/>
        </authorList>
    </citation>
    <scope>INTERACTION WITH RIPK1</scope>
</reference>
<reference key="32">
    <citation type="journal article" date="2020" name="Cell">
        <title>Influenza virus Z-RNAs induce ZBP1-mediated necroptosis.</title>
        <authorList>
            <person name="Zhang T."/>
            <person name="Yin C."/>
            <person name="Boyd D.F."/>
            <person name="Quarato G."/>
            <person name="Ingram J.P."/>
            <person name="Shubina M."/>
            <person name="Ragan K.B."/>
            <person name="Ishizuka T."/>
            <person name="Crawford J.C."/>
            <person name="Tummers B."/>
            <person name="Rodriguez D.A."/>
            <person name="Xue J."/>
            <person name="Peri S."/>
            <person name="Kaiser W.J."/>
            <person name="Lopez C.B."/>
            <person name="Xu Y."/>
            <person name="Upton J.W."/>
            <person name="Thomas P.G."/>
            <person name="Green D.R."/>
            <person name="Balachandran S."/>
        </authorList>
    </citation>
    <scope>FUNCTION</scope>
    <scope>CATALYTIC ACTIVITY</scope>
    <scope>ACTIVITY REGULATION</scope>
    <scope>SUBCELLULAR LOCATION</scope>
    <scope>DISRUPTION PHENOTYPE</scope>
    <scope>INTERACTION WITH ZBP1</scope>
</reference>
<reference key="33">
    <citation type="journal article" date="2020" name="Nature">
        <title>Z-nucleic-acid sensing triggers ZBP1-dependent necroptosis and inflammation.</title>
        <authorList>
            <person name="Jiao H."/>
            <person name="Wachsmuth L."/>
            <person name="Kumari S."/>
            <person name="Schwarzer R."/>
            <person name="Lin J."/>
            <person name="Eren R.O."/>
            <person name="Fisher A."/>
            <person name="Lane R."/>
            <person name="Young G.R."/>
            <person name="Kassiotis G."/>
            <person name="Kaiser W.J."/>
            <person name="Pasparakis M."/>
        </authorList>
    </citation>
    <scope>FUNCTION</scope>
    <scope>CATALYTIC ACTIVITY</scope>
    <scope>ACTIVITY REGULATION</scope>
    <scope>SUBCELLULAR LOCATION</scope>
</reference>
<reference key="34">
    <citation type="journal article" date="2021" name="Nature">
        <title>AIM2 forms a complex with pyrin and ZBP1 to drive PANoptosis and host defence.</title>
        <authorList>
            <person name="Lee S."/>
            <person name="Karki R."/>
            <person name="Wang Y."/>
            <person name="Nguyen L.N."/>
            <person name="Kalathur R.C."/>
            <person name="Kanneganti T.D."/>
        </authorList>
    </citation>
    <scope>IDENTIFICATION IN THE AIM2 PANOPTOSOME COMPLEX</scope>
</reference>
<reference key="35">
    <citation type="journal article" date="2013" name="Cell Rep.">
        <title>Structural insights into RIP3-mediated necroptotic signaling.</title>
        <authorList>
            <person name="Xie T."/>
            <person name="Peng W."/>
            <person name="Yan C."/>
            <person name="Wu J."/>
            <person name="Gong X."/>
            <person name="Shi Y."/>
        </authorList>
    </citation>
    <scope>X-RAY CRYSTALLOGRAPHY (2.4 ANGSTROMS) OF 1-313 OF MUTANT ALA-111 IN COMPLEX WITH ATP AND MLKL</scope>
    <scope>FUNCTION</scope>
    <scope>CATALYTIC ACTIVITY</scope>
    <scope>MUTAGENESIS OF CYS-111; LYS-230; SER-232 AND GLU-236</scope>
</reference>
<reference evidence="40" key="36">
    <citation type="journal article" date="2020" name="ACS Med. Chem. Lett.">
        <title>Identification of RIPK3 type II inhibitors using high-throughput mechanistic studies in hit triage.</title>
        <authorList>
            <person name="Hart A.C."/>
            <person name="Abell L."/>
            <person name="Guo J."/>
            <person name="Mertzman M.E."/>
            <person name="Padmanabha R."/>
            <person name="Macor J.E."/>
            <person name="Chaudhry C."/>
            <person name="Lu H."/>
            <person name="O'Malley K."/>
            <person name="Shaw P.J."/>
            <person name="Weigelt C."/>
            <person name="Pokross M."/>
            <person name="Kish K."/>
            <person name="Kim K.S."/>
            <person name="Cornelius L."/>
            <person name="Douglas A.E."/>
            <person name="Calambur D."/>
            <person name="Zhang P."/>
            <person name="Carpenter B."/>
            <person name="Pitts W.J."/>
        </authorList>
    </citation>
    <scope>X-RAY CRYSTALLOGRAPHY (2.10 ANGSTROMS) OF 1-313 IN COMPLEX WITH TYPE II KINASE INHIBITOR</scope>
    <scope>ACTIVITY REGULATION</scope>
</reference>
<feature type="chain" id="PRO_0000086611" description="Receptor-interacting serine/threonine-protein kinase 3">
    <location>
        <begin position="1"/>
        <end position="486"/>
    </location>
</feature>
<feature type="domain" description="Protein kinase" evidence="2 13 39">
    <location>
        <begin position="22"/>
        <end position="292"/>
    </location>
</feature>
<feature type="region of interest" description="Disordered" evidence="3">
    <location>
        <begin position="312"/>
        <end position="333"/>
    </location>
</feature>
<feature type="region of interest" description="Disordered" evidence="3">
    <location>
        <begin position="349"/>
        <end position="388"/>
    </location>
</feature>
<feature type="region of interest" description="Disordered" evidence="3">
    <location>
        <begin position="462"/>
        <end position="486"/>
    </location>
</feature>
<feature type="short sequence motif" description="RIP homotypic interaction motif (RHIM)" evidence="6">
    <location>
        <begin position="440"/>
        <end position="461"/>
    </location>
</feature>
<feature type="compositionally biased region" description="Polar residues" evidence="3">
    <location>
        <begin position="366"/>
        <end position="381"/>
    </location>
</feature>
<feature type="active site" description="Proton acceptor" evidence="36 37">
    <location>
        <position position="143"/>
    </location>
</feature>
<feature type="binding site" evidence="2 13 39">
    <location>
        <begin position="28"/>
        <end position="36"/>
    </location>
    <ligand>
        <name>ATP</name>
        <dbReference type="ChEBI" id="CHEBI:30616"/>
    </ligand>
</feature>
<feature type="binding site" evidence="13 39">
    <location>
        <position position="51"/>
    </location>
    <ligand>
        <name>ATP</name>
        <dbReference type="ChEBI" id="CHEBI:30616"/>
    </ligand>
</feature>
<feature type="modified residue" description="Phosphoserine" evidence="10">
    <location>
        <position position="2"/>
    </location>
</feature>
<feature type="modified residue" description="Phosphoserine" evidence="10">
    <location>
        <position position="165"/>
    </location>
</feature>
<feature type="modified residue" description="Phosphothreonine" evidence="1">
    <location>
        <position position="187"/>
    </location>
</feature>
<feature type="modified residue" description="Phosphoserine; by autocatalysis" evidence="1">
    <location>
        <position position="204"/>
    </location>
</feature>
<feature type="modified residue" description="Phosphothreonine; by autocatalysis" evidence="10 20">
    <location>
        <position position="231"/>
    </location>
</feature>
<feature type="modified residue" description="Phosphoserine; by autocatalysis" evidence="10 20">
    <location>
        <position position="232"/>
    </location>
</feature>
<feature type="modified residue" description="Phosphothreonine" evidence="10">
    <location>
        <position position="257"/>
    </location>
</feature>
<feature type="modified residue" description="Phosphoserine" evidence="10">
    <location>
        <position position="304"/>
    </location>
</feature>
<feature type="modified residue" description="Phosphoserine" evidence="10">
    <location>
        <position position="326"/>
    </location>
</feature>
<feature type="modified residue" description="Phosphothreonine" evidence="10">
    <location>
        <position position="338"/>
    </location>
</feature>
<feature type="modified residue" description="Phosphoserine" evidence="10">
    <location>
        <position position="353"/>
    </location>
</feature>
<feature type="modified residue" description="Phosphoserine" evidence="10">
    <location>
        <position position="369"/>
    </location>
</feature>
<feature type="modified residue" description="Phosphoserine" evidence="10">
    <location>
        <position position="380"/>
    </location>
</feature>
<feature type="modified residue" description="Phosphothreonine" evidence="10">
    <location>
        <position position="392"/>
    </location>
</feature>
<feature type="modified residue" description="Omega-N-methylarginine" evidence="41">
    <location>
        <position position="477"/>
    </location>
</feature>
<feature type="mutagenesis site" description="Complete loss of induced necrosis.">
    <original>K</original>
    <variation>A</variation>
    <location>
        <position position="51"/>
    </location>
</feature>
<feature type="mutagenesis site" description="No effect." evidence="13">
    <original>C</original>
    <variation>A</variation>
    <location>
        <position position="111"/>
    </location>
</feature>
<feature type="mutagenesis site" description="Abolishes kinase activity and ability to mediate necroptosis. No autophosphorylation." evidence="4 11">
    <original>D</original>
    <variation>N</variation>
    <location>
        <position position="143"/>
    </location>
</feature>
<feature type="mutagenesis site" description="Abolished protein kinase activity and ability to activate necroptosis. Knockin mice die during embryogenesis due to constitutive Ripk1- and Casp8-dependent apoptosis. Perinatal lethality observed in Ripk1 knockout mice is rescued in knockin mice carrying this mutation." evidence="14 20">
    <original>D</original>
    <variation>N</variation>
    <location>
        <position position="161"/>
    </location>
</feature>
<feature type="mutagenesis site" description="Slightly affects interaction with MLKL; when associated with A-236. Affects interaction with MLKL; when associated with A-232 and A-236." evidence="13">
    <original>K</original>
    <variation>A</variation>
    <location>
        <position position="230"/>
    </location>
</feature>
<feature type="mutagenesis site" description="Abolishes ability to mediate necroptosis." evidence="10">
    <original>T</original>
    <variation>A</variation>
    <location>
        <position position="231"/>
    </location>
</feature>
<feature type="mutagenesis site" description="Abolishes ability to mediate necroptosis. Affects interaction with MLKL; when associated with A-230 and A-236." evidence="8 10 13">
    <original>S</original>
    <variation>A</variation>
    <location>
        <position position="232"/>
    </location>
</feature>
<feature type="mutagenesis site" description="Slightly affects interaction with MLKL; when associated with A-230. Affects interaction with MLKL; when associated with A-230 and A-232." evidence="13">
    <original>E</original>
    <variation>A</variation>
    <location>
        <position position="236"/>
    </location>
</feature>
<feature type="mutagenesis site" description="In RIPK3(RHIM); abolished interaction with ZBP1 and subsequent necroptosis. Perinatal lethality observed in Ripk1 knockout mice is rescued in knockin mice carrying this mutation." evidence="6 20">
    <original>VQIG</original>
    <variation>AAAA</variation>
    <location>
        <begin position="448"/>
        <end position="451"/>
    </location>
</feature>
<feature type="sequence conflict" description="In Ref. 1; AAF03133 and 2; BAE32636." evidence="35" ref="1 2">
    <original>N</original>
    <variation>D</variation>
    <location>
        <position position="136"/>
    </location>
</feature>
<feature type="sequence conflict" description="In Ref. 1; AAF03133 and 2; BAE32636." evidence="35" ref="1 2">
    <original>D</original>
    <variation>K</variation>
    <location>
        <position position="198"/>
    </location>
</feature>
<feature type="sequence conflict" description="In Ref. 5; AAH29210." evidence="35" ref="5">
    <original>D</original>
    <variation>N</variation>
    <location>
        <position position="198"/>
    </location>
</feature>
<feature type="sequence conflict" description="In Ref. 2; BAE32636." evidence="35" ref="2">
    <original>D</original>
    <variation>G</variation>
    <location>
        <position position="283"/>
    </location>
</feature>
<feature type="sequence conflict" description="In Ref. 2; BAE32636." evidence="35" ref="2">
    <original>D</original>
    <variation>G</variation>
    <location>
        <position position="471"/>
    </location>
</feature>
<feature type="helix" evidence="44">
    <location>
        <begin position="19"/>
        <end position="21"/>
    </location>
</feature>
<feature type="strand" evidence="44">
    <location>
        <begin position="22"/>
        <end position="33"/>
    </location>
</feature>
<feature type="strand" evidence="44">
    <location>
        <begin position="35"/>
        <end position="41"/>
    </location>
</feature>
<feature type="turn" evidence="44">
    <location>
        <begin position="42"/>
        <end position="45"/>
    </location>
</feature>
<feature type="strand" evidence="44">
    <location>
        <begin position="46"/>
        <end position="53"/>
    </location>
</feature>
<feature type="turn" evidence="44">
    <location>
        <begin position="55"/>
        <end position="57"/>
    </location>
</feature>
<feature type="helix" evidence="44">
    <location>
        <begin position="58"/>
        <end position="65"/>
    </location>
</feature>
<feature type="strand" evidence="44">
    <location>
        <begin position="78"/>
        <end position="80"/>
    </location>
</feature>
<feature type="strand" evidence="44">
    <location>
        <begin position="83"/>
        <end position="85"/>
    </location>
</feature>
<feature type="strand" evidence="44">
    <location>
        <begin position="88"/>
        <end position="96"/>
    </location>
</feature>
<feature type="helix" evidence="44">
    <location>
        <begin position="103"/>
        <end position="106"/>
    </location>
</feature>
<feature type="helix" evidence="44">
    <location>
        <begin position="115"/>
        <end position="133"/>
    </location>
</feature>
<feature type="strand" evidence="44">
    <location>
        <begin position="135"/>
        <end position="137"/>
    </location>
</feature>
<feature type="helix" evidence="44">
    <location>
        <begin position="146"/>
        <end position="148"/>
    </location>
</feature>
<feature type="strand" evidence="44">
    <location>
        <begin position="149"/>
        <end position="151"/>
    </location>
</feature>
<feature type="strand" evidence="44">
    <location>
        <begin position="157"/>
        <end position="159"/>
    </location>
</feature>
<feature type="helix" evidence="42">
    <location>
        <begin position="164"/>
        <end position="167"/>
    </location>
</feature>
<feature type="helix" evidence="44">
    <location>
        <begin position="188"/>
        <end position="190"/>
    </location>
</feature>
<feature type="helix" evidence="44">
    <location>
        <begin position="193"/>
        <end position="196"/>
    </location>
</feature>
<feature type="helix" evidence="44">
    <location>
        <begin position="205"/>
        <end position="221"/>
    </location>
</feature>
<feature type="helix" evidence="42">
    <location>
        <begin position="231"/>
        <end position="237"/>
    </location>
</feature>
<feature type="turn" evidence="42">
    <location>
        <begin position="238"/>
        <end position="241"/>
    </location>
</feature>
<feature type="helix" evidence="44">
    <location>
        <begin position="247"/>
        <end position="249"/>
    </location>
</feature>
<feature type="strand" evidence="42">
    <location>
        <begin position="255"/>
        <end position="257"/>
    </location>
</feature>
<feature type="helix" evidence="44">
    <location>
        <begin position="260"/>
        <end position="270"/>
    </location>
</feature>
<feature type="helix" evidence="44">
    <location>
        <begin position="275"/>
        <end position="277"/>
    </location>
</feature>
<feature type="helix" evidence="44">
    <location>
        <begin position="281"/>
        <end position="295"/>
    </location>
</feature>
<feature type="helix" evidence="44">
    <location>
        <begin position="296"/>
        <end position="298"/>
    </location>
</feature>
<feature type="helix" evidence="44">
    <location>
        <begin position="299"/>
        <end position="310"/>
    </location>
</feature>
<feature type="strand" evidence="43">
    <location>
        <begin position="445"/>
        <end position="450"/>
    </location>
</feature>
<dbReference type="EC" id="2.7.11.1" evidence="4 13 29 30"/>
<dbReference type="EMBL" id="AF178953">
    <property type="protein sequence ID" value="AAF03133.1"/>
    <property type="molecule type" value="mRNA"/>
</dbReference>
<dbReference type="EMBL" id="AK154505">
    <property type="protein sequence ID" value="BAE32636.1"/>
    <property type="molecule type" value="mRNA"/>
</dbReference>
<dbReference type="EMBL" id="AC098877">
    <property type="status" value="NOT_ANNOTATED_CDS"/>
    <property type="molecule type" value="Genomic_DNA"/>
</dbReference>
<dbReference type="EMBL" id="CH466535">
    <property type="protein sequence ID" value="EDL36236.1"/>
    <property type="molecule type" value="Genomic_DNA"/>
</dbReference>
<dbReference type="EMBL" id="BC029210">
    <property type="protein sequence ID" value="AAH29210.1"/>
    <property type="molecule type" value="mRNA"/>
</dbReference>
<dbReference type="CCDS" id="CCDS27131.1"/>
<dbReference type="RefSeq" id="NP_064339.2">
    <property type="nucleotide sequence ID" value="NM_019955.2"/>
</dbReference>
<dbReference type="PDB" id="4M66">
    <property type="method" value="X-ray"/>
    <property type="resolution" value="2.40 A"/>
    <property type="chains" value="A/B=1-313"/>
</dbReference>
<dbReference type="PDB" id="4M69">
    <property type="method" value="X-ray"/>
    <property type="resolution" value="2.50 A"/>
    <property type="chains" value="A=1-313"/>
</dbReference>
<dbReference type="PDB" id="6JPD">
    <property type="method" value="NMR"/>
    <property type="chains" value="A/B/C/D/E=409-486"/>
</dbReference>
<dbReference type="PDB" id="6OKO">
    <property type="method" value="X-ray"/>
    <property type="resolution" value="2.10 A"/>
    <property type="chains" value="A/B=1-313"/>
</dbReference>
<dbReference type="PDBsum" id="4M66"/>
<dbReference type="PDBsum" id="4M69"/>
<dbReference type="PDBsum" id="6JPD"/>
<dbReference type="PDBsum" id="6OKO"/>
<dbReference type="SMR" id="Q9QZL0"/>
<dbReference type="BioGRID" id="208042">
    <property type="interactions" value="7"/>
</dbReference>
<dbReference type="CORUM" id="Q9QZL0"/>
<dbReference type="DIP" id="DIP-54883N"/>
<dbReference type="FunCoup" id="Q9QZL0">
    <property type="interactions" value="300"/>
</dbReference>
<dbReference type="IntAct" id="Q9QZL0">
    <property type="interactions" value="14"/>
</dbReference>
<dbReference type="MINT" id="Q9QZL0"/>
<dbReference type="STRING" id="10090.ENSMUSP00000022830"/>
<dbReference type="ChEMBL" id="CHEMBL5465365"/>
<dbReference type="GlyGen" id="Q9QZL0">
    <property type="glycosylation" value="3 sites, 1 O-linked glycan (2 sites)"/>
</dbReference>
<dbReference type="iPTMnet" id="Q9QZL0"/>
<dbReference type="PhosphoSitePlus" id="Q9QZL0"/>
<dbReference type="PaxDb" id="10090-ENSMUSP00000022830"/>
<dbReference type="PeptideAtlas" id="Q9QZL0"/>
<dbReference type="ProteomicsDB" id="253246"/>
<dbReference type="Pumba" id="Q9QZL0"/>
<dbReference type="Antibodypedia" id="9228">
    <property type="antibodies" value="921 antibodies from 47 providers"/>
</dbReference>
<dbReference type="DNASU" id="56532"/>
<dbReference type="Ensembl" id="ENSMUST00000022830.14">
    <property type="protein sequence ID" value="ENSMUSP00000022830.7"/>
    <property type="gene ID" value="ENSMUSG00000022221.15"/>
</dbReference>
<dbReference type="GeneID" id="56532"/>
<dbReference type="KEGG" id="mmu:56532"/>
<dbReference type="UCSC" id="uc007uav.2">
    <property type="organism name" value="mouse"/>
</dbReference>
<dbReference type="AGR" id="MGI:2154952"/>
<dbReference type="CTD" id="11035"/>
<dbReference type="MGI" id="MGI:2154952">
    <property type="gene designation" value="Ripk3"/>
</dbReference>
<dbReference type="VEuPathDB" id="HostDB:ENSMUSG00000022221"/>
<dbReference type="eggNOG" id="KOG0192">
    <property type="taxonomic scope" value="Eukaryota"/>
</dbReference>
<dbReference type="GeneTree" id="ENSGT00940000160206"/>
<dbReference type="HOGENOM" id="CLU_559689_0_0_1"/>
<dbReference type="InParanoid" id="Q9QZL0"/>
<dbReference type="OMA" id="WDYVSGP"/>
<dbReference type="OrthoDB" id="4062651at2759"/>
<dbReference type="PhylomeDB" id="Q9QZL0"/>
<dbReference type="TreeFam" id="TF106506"/>
<dbReference type="Reactome" id="R-MMU-2562578">
    <property type="pathway name" value="TRIF-mediated programmed cell death"/>
</dbReference>
<dbReference type="Reactome" id="R-MMU-3295583">
    <property type="pathway name" value="TRP channels"/>
</dbReference>
<dbReference type="Reactome" id="R-MMU-5213460">
    <property type="pathway name" value="RIPK1-mediated regulated necrosis"/>
</dbReference>
<dbReference type="Reactome" id="R-MMU-5675482">
    <property type="pathway name" value="Regulation of necroptotic cell death"/>
</dbReference>
<dbReference type="Reactome" id="R-MMU-937041">
    <property type="pathway name" value="IKK complex recruitment mediated by RIP1"/>
</dbReference>
<dbReference type="BioGRID-ORCS" id="56532">
    <property type="hits" value="1 hit in 78 CRISPR screens"/>
</dbReference>
<dbReference type="ChiTaRS" id="Ripk3">
    <property type="organism name" value="mouse"/>
</dbReference>
<dbReference type="EvolutionaryTrace" id="Q9QZL0"/>
<dbReference type="PRO" id="PR:Q9QZL0"/>
<dbReference type="Proteomes" id="UP000000589">
    <property type="component" value="Chromosome 14"/>
</dbReference>
<dbReference type="RNAct" id="Q9QZL0">
    <property type="molecule type" value="protein"/>
</dbReference>
<dbReference type="Bgee" id="ENSMUSG00000022221">
    <property type="expression patterns" value="Expressed in endothelial cell of lymphatic vessel and 163 other cell types or tissues"/>
</dbReference>
<dbReference type="ExpressionAtlas" id="Q9QZL0">
    <property type="expression patterns" value="baseline and differential"/>
</dbReference>
<dbReference type="GO" id="GO:0005737">
    <property type="term" value="C:cytoplasm"/>
    <property type="evidence" value="ECO:0000314"/>
    <property type="project" value="UniProtKB"/>
</dbReference>
<dbReference type="GO" id="GO:0005829">
    <property type="term" value="C:cytosol"/>
    <property type="evidence" value="ECO:0000250"/>
    <property type="project" value="UniProtKB"/>
</dbReference>
<dbReference type="GO" id="GO:0005634">
    <property type="term" value="C:nucleus"/>
    <property type="evidence" value="ECO:0000314"/>
    <property type="project" value="UniProtKB"/>
</dbReference>
<dbReference type="GO" id="GO:0032991">
    <property type="term" value="C:protein-containing complex"/>
    <property type="evidence" value="ECO:0007669"/>
    <property type="project" value="Ensembl"/>
</dbReference>
<dbReference type="GO" id="GO:0005524">
    <property type="term" value="F:ATP binding"/>
    <property type="evidence" value="ECO:0007669"/>
    <property type="project" value="UniProtKB-KW"/>
</dbReference>
<dbReference type="GO" id="GO:0042802">
    <property type="term" value="F:identical protein binding"/>
    <property type="evidence" value="ECO:0007669"/>
    <property type="project" value="Ensembl"/>
</dbReference>
<dbReference type="GO" id="GO:0004672">
    <property type="term" value="F:protein kinase activity"/>
    <property type="evidence" value="ECO:0000314"/>
    <property type="project" value="MGI"/>
</dbReference>
<dbReference type="GO" id="GO:0106310">
    <property type="term" value="F:protein serine kinase activity"/>
    <property type="evidence" value="ECO:0007669"/>
    <property type="project" value="RHEA"/>
</dbReference>
<dbReference type="GO" id="GO:0004674">
    <property type="term" value="F:protein serine/threonine kinase activity"/>
    <property type="evidence" value="ECO:0000314"/>
    <property type="project" value="UniProtKB"/>
</dbReference>
<dbReference type="GO" id="GO:0044877">
    <property type="term" value="F:protein-containing complex binding"/>
    <property type="evidence" value="ECO:0007669"/>
    <property type="project" value="Ensembl"/>
</dbReference>
<dbReference type="GO" id="GO:0032147">
    <property type="term" value="P:activation of protein kinase activity"/>
    <property type="evidence" value="ECO:0000250"/>
    <property type="project" value="UniProtKB"/>
</dbReference>
<dbReference type="GO" id="GO:1990000">
    <property type="term" value="P:amyloid fibril formation"/>
    <property type="evidence" value="ECO:0000250"/>
    <property type="project" value="UniProtKB"/>
</dbReference>
<dbReference type="GO" id="GO:0006915">
    <property type="term" value="P:apoptotic process"/>
    <property type="evidence" value="ECO:0007669"/>
    <property type="project" value="UniProtKB-KW"/>
</dbReference>
<dbReference type="GO" id="GO:0070301">
    <property type="term" value="P:cellular response to hydrogen peroxide"/>
    <property type="evidence" value="ECO:0000315"/>
    <property type="project" value="ARUK-UCL"/>
</dbReference>
<dbReference type="GO" id="GO:0051607">
    <property type="term" value="P:defense response to virus"/>
    <property type="evidence" value="ECO:0000314"/>
    <property type="project" value="UniProtKB"/>
</dbReference>
<dbReference type="GO" id="GO:0097528">
    <property type="term" value="P:execution phase of necroptosis"/>
    <property type="evidence" value="ECO:0000315"/>
    <property type="project" value="UniProtKB"/>
</dbReference>
<dbReference type="GO" id="GO:0048535">
    <property type="term" value="P:lymph node development"/>
    <property type="evidence" value="ECO:0000316"/>
    <property type="project" value="UniProtKB"/>
</dbReference>
<dbReference type="GO" id="GO:0070266">
    <property type="term" value="P:necroptotic process"/>
    <property type="evidence" value="ECO:0000315"/>
    <property type="project" value="UniProtKB"/>
</dbReference>
<dbReference type="GO" id="GO:0097527">
    <property type="term" value="P:necroptotic signaling pathway"/>
    <property type="evidence" value="ECO:0007669"/>
    <property type="project" value="Ensembl"/>
</dbReference>
<dbReference type="GO" id="GO:0038061">
    <property type="term" value="P:non-canonical NF-kappaB signal transduction"/>
    <property type="evidence" value="ECO:0000315"/>
    <property type="project" value="MGI"/>
</dbReference>
<dbReference type="GO" id="GO:2001244">
    <property type="term" value="P:positive regulation of intrinsic apoptotic signaling pathway"/>
    <property type="evidence" value="ECO:0000314"/>
    <property type="project" value="MGI"/>
</dbReference>
<dbReference type="GO" id="GO:0060545">
    <property type="term" value="P:positive regulation of necroptotic process"/>
    <property type="evidence" value="ECO:0000314"/>
    <property type="project" value="UniProtKB"/>
</dbReference>
<dbReference type="GO" id="GO:2000379">
    <property type="term" value="P:positive regulation of reactive oxygen species metabolic process"/>
    <property type="evidence" value="ECO:0000315"/>
    <property type="project" value="UniProtKB"/>
</dbReference>
<dbReference type="GO" id="GO:0097300">
    <property type="term" value="P:programmed necrotic cell death"/>
    <property type="evidence" value="ECO:0000315"/>
    <property type="project" value="ARUK-UCL"/>
</dbReference>
<dbReference type="GO" id="GO:0072593">
    <property type="term" value="P:reactive oxygen species metabolic process"/>
    <property type="evidence" value="ECO:0000315"/>
    <property type="project" value="MGI"/>
</dbReference>
<dbReference type="GO" id="GO:0046006">
    <property type="term" value="P:regulation of activated T cell proliferation"/>
    <property type="evidence" value="ECO:0000316"/>
    <property type="project" value="UniProtKB"/>
</dbReference>
<dbReference type="GO" id="GO:0070235">
    <property type="term" value="P:regulation of activation-induced cell death of T cells"/>
    <property type="evidence" value="ECO:0000316"/>
    <property type="project" value="UniProtKB"/>
</dbReference>
<dbReference type="GO" id="GO:0002819">
    <property type="term" value="P:regulation of adaptive immune response"/>
    <property type="evidence" value="ECO:0000316"/>
    <property type="project" value="UniProtKB"/>
</dbReference>
<dbReference type="GO" id="GO:0042981">
    <property type="term" value="P:regulation of apoptotic process"/>
    <property type="evidence" value="ECO:0000314"/>
    <property type="project" value="UniProtKB"/>
</dbReference>
<dbReference type="GO" id="GO:2000452">
    <property type="term" value="P:regulation of CD8-positive, alpha-beta cytotoxic T cell extravasation"/>
    <property type="evidence" value="ECO:0000316"/>
    <property type="project" value="UniProtKB"/>
</dbReference>
<dbReference type="GO" id="GO:2000377">
    <property type="term" value="P:regulation of reactive oxygen species metabolic process"/>
    <property type="evidence" value="ECO:0000315"/>
    <property type="project" value="MGI"/>
</dbReference>
<dbReference type="GO" id="GO:0001914">
    <property type="term" value="P:regulation of T cell mediated cytotoxicity"/>
    <property type="evidence" value="ECO:0000316"/>
    <property type="project" value="UniProtKB"/>
</dbReference>
<dbReference type="GO" id="GO:0032649">
    <property type="term" value="P:regulation of type II interferon production"/>
    <property type="evidence" value="ECO:0000316"/>
    <property type="project" value="UniProtKB"/>
</dbReference>
<dbReference type="GO" id="GO:0048536">
    <property type="term" value="P:spleen development"/>
    <property type="evidence" value="ECO:0000316"/>
    <property type="project" value="UniProtKB"/>
</dbReference>
<dbReference type="GO" id="GO:0033077">
    <property type="term" value="P:T cell differentiation in thymus"/>
    <property type="evidence" value="ECO:0000316"/>
    <property type="project" value="UniProtKB"/>
</dbReference>
<dbReference type="GO" id="GO:0043029">
    <property type="term" value="P:T cell homeostasis"/>
    <property type="evidence" value="ECO:0000316"/>
    <property type="project" value="UniProtKB"/>
</dbReference>
<dbReference type="GO" id="GO:0048538">
    <property type="term" value="P:thymus development"/>
    <property type="evidence" value="ECO:0000316"/>
    <property type="project" value="UniProtKB"/>
</dbReference>
<dbReference type="FunFam" id="1.10.510.10:FF:000661">
    <property type="entry name" value="Receptor-interacting serine/threonine-protein kinase 3"/>
    <property type="match status" value="1"/>
</dbReference>
<dbReference type="Gene3D" id="1.10.510.10">
    <property type="entry name" value="Transferase(Phosphotransferase) domain 1"/>
    <property type="match status" value="1"/>
</dbReference>
<dbReference type="InterPro" id="IPR011009">
    <property type="entry name" value="Kinase-like_dom_sf"/>
</dbReference>
<dbReference type="InterPro" id="IPR000719">
    <property type="entry name" value="Prot_kinase_dom"/>
</dbReference>
<dbReference type="InterPro" id="IPR017441">
    <property type="entry name" value="Protein_kinase_ATP_BS"/>
</dbReference>
<dbReference type="InterPro" id="IPR025735">
    <property type="entry name" value="RHIM"/>
</dbReference>
<dbReference type="InterPro" id="IPR008271">
    <property type="entry name" value="Ser/Thr_kinase_AS"/>
</dbReference>
<dbReference type="InterPro" id="IPR051681">
    <property type="entry name" value="Ser/Thr_Kinases-Pseudokinases"/>
</dbReference>
<dbReference type="PANTHER" id="PTHR44329:SF297">
    <property type="entry name" value="RECEPTOR-INTERACTING SERINE_THREONINE-PROTEIN KINASE 3"/>
    <property type="match status" value="1"/>
</dbReference>
<dbReference type="PANTHER" id="PTHR44329">
    <property type="entry name" value="SERINE/THREONINE-PROTEIN KINASE TNNI3K-RELATED"/>
    <property type="match status" value="1"/>
</dbReference>
<dbReference type="Pfam" id="PF00069">
    <property type="entry name" value="Pkinase"/>
    <property type="match status" value="1"/>
</dbReference>
<dbReference type="Pfam" id="PF12721">
    <property type="entry name" value="RHIM"/>
    <property type="match status" value="1"/>
</dbReference>
<dbReference type="SMART" id="SM00220">
    <property type="entry name" value="S_TKc"/>
    <property type="match status" value="1"/>
</dbReference>
<dbReference type="SUPFAM" id="SSF56112">
    <property type="entry name" value="Protein kinase-like (PK-like)"/>
    <property type="match status" value="1"/>
</dbReference>
<dbReference type="PROSITE" id="PS00107">
    <property type="entry name" value="PROTEIN_KINASE_ATP"/>
    <property type="match status" value="1"/>
</dbReference>
<dbReference type="PROSITE" id="PS50011">
    <property type="entry name" value="PROTEIN_KINASE_DOM"/>
    <property type="match status" value="1"/>
</dbReference>
<dbReference type="PROSITE" id="PS00108">
    <property type="entry name" value="PROTEIN_KINASE_ST"/>
    <property type="match status" value="1"/>
</dbReference>
<proteinExistence type="evidence at protein level"/>
<comment type="function">
    <text evidence="1 7 9 11 12 13 14 15 16 17 18 19 20 21 22 26 29 30">Serine/threonine-protein kinase that activates necroptosis and apoptosis, two parallel forms of cell death (PubMed:27321907, PubMed:27746097, PubMed:27917412, PubMed:28607035, PubMed:32200799, PubMed:32296175). Necroptosis, a programmed cell death process in response to death-inducing TNF-alpha family members, is triggered by RIPK3 following activation by ZBP1 (PubMed:19590578, PubMed:22423968, PubMed:24012422, PubMed:24019532, PubMed:24095729, PubMed:24557836, PubMed:27321907, PubMed:27746097, PubMed:27819681, PubMed:27819682, PubMed:32200799, PubMed:32296175). Activated RIPK3 forms a necrosis-inducing complex and mediates phosphorylation of MLKL, promoting MLKL localization to the plasma membrane and execution of programmed necrosis characterized by calcium influx and plasma membrane damage (PubMed:24813849, PubMed:24813850, PubMed:27321907). In addition to TNF-induced necroptosis, necroptosis can also take place in the nucleus in response to orthomyxoviruses infection: following ZBP1 activation, which senses double-stranded Z-RNA structures, nuclear RIPK3 catalyzes phosphorylation and activation of MLKL, promoting disruption of the nuclear envelope and leakage of cellular DNA into the cytosol (PubMed:32200799, PubMed:32296175). Also regulates apoptosis: apoptosis depends on RIPK1, FADD and CASP8, and is independent of MLKL and RIPK3 kinase activity (PubMed:27321907). Phosphorylates RIPK1: RIPK1 and RIPK3 undergo reciprocal auto- and trans-phosphorylation (By similarity). In some cell types, also able to restrict viral replication by promoting cell death-independent responses (PubMed:30635240). In response to flavivirus infection in neurons, promotes a cell death-independent pathway that restricts viral replication: together with ZBP1, promotes a death-independent transcriptional program that modifies the cellular metabolism via up-regulation expression of the enzyme ACOD1/IRG1 and production of the metabolite itaconate (PubMed:30635240). Itaconate inhibits the activity of succinate dehydrogenase, generating a metabolic state in neurons that suppresses replication of viral genomes (PubMed:30635240). RIPK3 binds to and enhances the activity of three metabolic enzymes: GLUL, GLUD1, and PYGL (By similarity). These metabolic enzymes may eventually stimulate the tricarboxylic acid cycle and oxidative phosphorylation, which could result in enhanced ROS production (By similarity).</text>
</comment>
<comment type="catalytic activity">
    <reaction evidence="4 13 29 30">
        <text>L-seryl-[protein] + ATP = O-phospho-L-seryl-[protein] + ADP + H(+)</text>
        <dbReference type="Rhea" id="RHEA:17989"/>
        <dbReference type="Rhea" id="RHEA-COMP:9863"/>
        <dbReference type="Rhea" id="RHEA-COMP:11604"/>
        <dbReference type="ChEBI" id="CHEBI:15378"/>
        <dbReference type="ChEBI" id="CHEBI:29999"/>
        <dbReference type="ChEBI" id="CHEBI:30616"/>
        <dbReference type="ChEBI" id="CHEBI:83421"/>
        <dbReference type="ChEBI" id="CHEBI:456216"/>
        <dbReference type="EC" id="2.7.11.1"/>
    </reaction>
</comment>
<comment type="catalytic activity">
    <reaction evidence="4 13 29 30">
        <text>L-threonyl-[protein] + ATP = O-phospho-L-threonyl-[protein] + ADP + H(+)</text>
        <dbReference type="Rhea" id="RHEA:46608"/>
        <dbReference type="Rhea" id="RHEA-COMP:11060"/>
        <dbReference type="Rhea" id="RHEA-COMP:11605"/>
        <dbReference type="ChEBI" id="CHEBI:15378"/>
        <dbReference type="ChEBI" id="CHEBI:30013"/>
        <dbReference type="ChEBI" id="CHEBI:30616"/>
        <dbReference type="ChEBI" id="CHEBI:61977"/>
        <dbReference type="ChEBI" id="CHEBI:456216"/>
        <dbReference type="EC" id="2.7.11.1"/>
    </reaction>
</comment>
<comment type="activity regulation">
    <text evidence="14 15 16 17 19 20 28 29 30">Activity is stimulated by ZBP1, which senses double-stranded Z-RNA structures (PubMed:32200799, PubMed:32296175). RIPK3-dependent necroptosis is inhibited by RIPK1: RIPK1 prevents the ZBP1-induced activation of RIPK3 via FADD-mediated recruitment of CASP8, which cleaves RIPK1 and limits TNF-induced necroptosis (PubMed:24557836, PubMed:24813849, PubMed:24813850, PubMed:27321907, PubMed:27819681, PubMed:27819682, PubMed:32296175). Inhibited by type II inhibitor 1-(4-fluorophenyl)-N-[3-fluoro-4-(1H-pyrrolo[2,3-b]pyridin-4-yloxy)phenyl]-2-oxo-1,2-dihydropyridine-3-carboxamide (PubMed:32184955).</text>
</comment>
<comment type="subunit">
    <text evidence="1 7 9 11 17 18 19 20 22 23 24 27 29 31">Interacts (via RIP homotypic interaction motif) with RIPK1 (via RIP homotypic interaction motif); this interaction induces RIPK1 phosphorylation and formation of a RIPK1-RIPK3 necrosis-inducing complex (PubMed:27321907, PubMed:27819681, PubMed:28842570, PubMed:31519887). Interacts with MLKL; the interaction is direct and triggers necroptosis (PubMed:24012422, PubMed:27321907). Interacts with ZBP1 (via RIP homotypic interaction motif); interaction with ZBP1 activates RIPK3, triggering necroptosis (PubMed:19590578, PubMed:22423968, PubMed:27746097, PubMed:27819681, PubMed:27819682, PubMed:28607035, PubMed:32200799). Upon TNF-induced necrosis, the RIPK1-RIPK3 dimer further interacts with PGAM5 and MLKL; the formation of this complex leads to PGAM5 phosphorylation and increase in PGAM5 phosphatase activity (By similarity). Binds TRAF2 and is recruited to the TNFR-1 signaling complex (By similarity). Interacts with PYGL, GLUL and GLUD1; these interactions result in activation of these metabolic enzymes (By similarity). Interacts with BIRC2/c-IAP1, BIRC3/c-IAP2 and XIAP/BIRC4 (By similarity). Interacts with ARHGEF2 (By similarity). Interacts with PELI1 (via atypical FHA domain); the phosphorylated form at Thr-187 binds preferentially to PELI1 (PubMed:29883609). Interacts with BUB1B, TRAF2 and STUB1 (By similarity). Interacts with CASP6 (By similarity). Component of the AIM2 PANoptosome complex, a multiprotein complex that drives inflammatory cell death (PANoptosis) (PubMed:34471287).</text>
</comment>
<comment type="subunit">
    <text evidence="6 25">(Microbial infection) Interacts (via RIP homotypic interaction motif) with murid herpesvirus protein RIR1; this interaction disrupts RIP3-RIP1 interactions characteristic of TNF-alpha induced necroptosis, thereby suppressing this death pathway.</text>
</comment>
<comment type="interaction">
    <interactant intactId="EBI-2367423">
        <id>Q9QZL0</id>
    </interactant>
    <interactant intactId="EBI-524415">
        <id>Q61160</id>
        <label>Fadd</label>
    </interactant>
    <organismsDiffer>false</organismsDiffer>
    <experiments>6</experiments>
</comment>
<comment type="interaction">
    <interactant intactId="EBI-2367423">
        <id>Q9QZL0</id>
    </interactant>
    <interactant intactId="EBI-5401970">
        <id>Q9D2Y4</id>
        <label>Mlkl</label>
    </interactant>
    <organismsDiffer>false</organismsDiffer>
    <experiments>3</experiments>
</comment>
<comment type="interaction">
    <interactant intactId="EBI-2367423">
        <id>Q9QZL0</id>
    </interactant>
    <interactant intactId="EBI-529119">
        <id>Q60855</id>
        <label>Ripk1</label>
    </interactant>
    <organismsDiffer>false</organismsDiffer>
    <experiments>4</experiments>
</comment>
<comment type="interaction">
    <interactant intactId="EBI-2367423">
        <id>Q9QZL0</id>
    </interactant>
    <interactant intactId="EBI-77321">
        <id>Q9UER7</id>
        <label>DAXX</label>
    </interactant>
    <organismsDiffer>true</organismsDiffer>
    <experiments>2</experiments>
</comment>
<comment type="subcellular location">
    <subcellularLocation>
        <location evidence="22 29 30">Cytoplasm</location>
        <location evidence="22 29 30">Cytosol</location>
    </subcellularLocation>
    <subcellularLocation>
        <location evidence="22 29 30">Nucleus</location>
    </subcellularLocation>
    <text evidence="29 30">Mainly cytoplasmic (PubMed:32200799, PubMed:32296175). Present in the nucleus in response to influenza A virus (IAV) infection (PubMed:32200799).</text>
</comment>
<comment type="tissue specificity">
    <text evidence="4">Expressed in embryo and in adult spleen, liver, testis, heart, brain and lung.</text>
</comment>
<comment type="domain">
    <text evidence="1">The RIP homotypic interaction motif (RHIM) mediates interaction with the RHIM motif of RIPK1. Both motifs form a hetero-amyloid serpentine fold, stabilized by hydrophobic packing and featuring an unusual Cys-Ser ladder of alternating Ser (from RIPK1) and Cys (from RIPK3).</text>
</comment>
<comment type="PTM">
    <text evidence="1 10 19 20">RIPK1 and RIPK3 undergo reciprocal auto- and trans-phosphorylation (By similarity). Autophosphorylated following interaction with ZBP1 (PubMed:27819681). Phosphorylation of Ser-204 plays a role in the necroptotic function of RIPK3 (By similarity). Autophosphorylates at Thr-231 and Ser-232 following activation by ZBP1: phosphorylation at these sites is a hallmark of necroptosis and is required for binding MLKL (PubMed:23612963, PubMed:27819682). Phosphorylation at Thr-187 is important for its kinase activity, interaction with PELI1 and for its ability to mediate TNF-induced necroptosis (By similarity).</text>
</comment>
<comment type="PTM">
    <text evidence="1">Polyubiquitinated with 'Lys-48' and 'Lys-63'-linked chains by BIRC2/c-IAP1 and BIRC3/c-IAP2, leading to activation of NF-kappa-B. Ubiquitinated by STUB1 leading to its subsequent proteasome-dependent degradation.</text>
</comment>
<comment type="disruption phenotype">
    <text evidence="5 14 15 16 17 19 20 29">No visible phenotype in normal conditions; mice are viable and indistinguishable from wild-type mice (PubMed:14749364, PubMed:24557836). Mice are resistant to TNF-induced hypothermia (PubMed:24557836). Mice are more susceptible to influenza A virus (IAV) infection than wild-type mice: at a modestly lethal dose of IAV, mice display significantly increased rates of mortality, probably caused by a failure to eliminate infected cells and limit virus spread in pulmonary tissue (PubMed:27321907, PubMed:32200799). Perinatal lethality observed in Ripk1 knockout mice is rescued in knockout mice lacking both Ripk1 and Ripk3; mice however die the first days of postnatal life (PubMed:24813849, PubMed:24813850, PubMed:27819681, PubMed:27819682). Only mice lacking Ripk1, Ripk3 and Casp8 survive past weaning and rescue lethality caused by the absence of Ripk1 (PubMed:24813849, PubMed:24813850).</text>
</comment>
<comment type="similarity">
    <text evidence="35">Belongs to the protein kinase superfamily. TKL Ser/Thr protein kinase family.</text>
</comment>
<name>RIPK3_MOUSE</name>
<keyword id="KW-0002">3D-structure</keyword>
<keyword id="KW-0053">Apoptosis</keyword>
<keyword id="KW-0067">ATP-binding</keyword>
<keyword id="KW-0963">Cytoplasm</keyword>
<keyword id="KW-0945">Host-virus interaction</keyword>
<keyword id="KW-0418">Kinase</keyword>
<keyword id="KW-0488">Methylation</keyword>
<keyword id="KW-1210">Necrosis</keyword>
<keyword id="KW-0547">Nucleotide-binding</keyword>
<keyword id="KW-0539">Nucleus</keyword>
<keyword id="KW-0597">Phosphoprotein</keyword>
<keyword id="KW-1185">Reference proteome</keyword>
<keyword id="KW-0723">Serine/threonine-protein kinase</keyword>
<keyword id="KW-0808">Transferase</keyword>
<keyword id="KW-0832">Ubl conjugation</keyword>